<gene>
    <name type="ordered locus">FPV055</name>
    <name type="ORF">D8</name>
    <name type="ORF">FP30</name>
</gene>
<accession>P21975</accession>
<protein>
    <recommendedName>
        <fullName>Putative Ig-like V-type domain-containing protein FPV055</fullName>
        <shortName>Protein Y</shortName>
    </recommendedName>
</protein>
<reference key="1">
    <citation type="journal article" date="1990" name="J. Gen. Virol.">
        <title>Nucleotide sequence analysis of a 10.5 kbp HindIII fragment of fowlpox virus: relatedness to the central portion of the vaccinia virus HindIII D region.</title>
        <authorList>
            <person name="Tartaglia J."/>
            <person name="Winslow J."/>
            <person name="Goebel S.J."/>
            <person name="Johnson G.P."/>
            <person name="Taylor J."/>
            <person name="Paoletti E."/>
        </authorList>
    </citation>
    <scope>NUCLEOTIDE SEQUENCE [GENOMIC DNA]</scope>
    <source>
        <strain>FP-1</strain>
    </source>
</reference>
<reference key="2">
    <citation type="journal article" date="1998" name="Virus Genes">
        <title>Nucleotide sequence of the 4.3 kbp BamHI-N fragment of fowlpox virus FP9.</title>
        <authorList>
            <person name="Pollitt E."/>
            <person name="Skinner M.A."/>
            <person name="Heaphy S."/>
        </authorList>
    </citation>
    <scope>NUCLEOTIDE SEQUENCE [GENOMIC DNA]</scope>
    <source>
        <strain>FP-9 / Isolate HP-440</strain>
    </source>
</reference>
<reference key="3">
    <citation type="journal article" date="2000" name="J. Virol.">
        <title>The genome of fowlpox virus.</title>
        <authorList>
            <person name="Afonso C.L."/>
            <person name="Tulman E.R."/>
            <person name="Lu Z."/>
            <person name="Zsak L."/>
            <person name="Kutish G.F."/>
            <person name="Rock D.L."/>
        </authorList>
    </citation>
    <scope>NUCLEOTIDE SEQUENCE [LARGE SCALE GENOMIC DNA]</scope>
</reference>
<keyword id="KW-0393">Immunoglobulin domain</keyword>
<keyword id="KW-1185">Reference proteome</keyword>
<keyword id="KW-0677">Repeat</keyword>
<sequence>MICKNSIRHKELTLIIFLCFIYLSKTFVEVKAPPYVLVPEGSDINLTCFIKDDQGAGEDKVIVAWQQGDGEVTQGIKTTWDTTRQVGQTMLHISKVSKEAEGSYMCVVWINGDADYKKMNLGVFTVSKKTYMHNEVSITPRRSRVDMSDGRPLKIECAFSTRRIYGRSQVNIKWWKIDGITRKWEQQTSGVNLLLHTYGGIGSLSIPNPTTGESTGKYMCVVTCGDIGNVGFRLVKSLSPLSDTESDHSYTSEEGSHFMERCKVKKSPYGGWIVE</sequence>
<proteinExistence type="predicted"/>
<feature type="chain" id="PRO_0000072709" description="Putative Ig-like V-type domain-containing protein FPV055">
    <location>
        <begin position="1"/>
        <end position="275"/>
    </location>
</feature>
<feature type="domain" description="Ig-like V-type 1">
    <location>
        <begin position="25"/>
        <end position="122"/>
    </location>
</feature>
<feature type="domain" description="Ig-like V-type 2">
    <location>
        <begin position="140"/>
        <end position="239"/>
    </location>
</feature>
<organism>
    <name type="scientific">Fowlpox virus (strain NVSL)</name>
    <name type="common">FPV</name>
    <dbReference type="NCBI Taxonomy" id="928301"/>
    <lineage>
        <taxon>Viruses</taxon>
        <taxon>Varidnaviria</taxon>
        <taxon>Bamfordvirae</taxon>
        <taxon>Nucleocytoviricota</taxon>
        <taxon>Pokkesviricetes</taxon>
        <taxon>Chitovirales</taxon>
        <taxon>Poxviridae</taxon>
        <taxon>Chordopoxvirinae</taxon>
        <taxon>Avipoxvirus</taxon>
        <taxon>Fowlpox virus</taxon>
    </lineage>
</organism>
<name>V055_FOWPN</name>
<dbReference type="EMBL" id="X17202">
    <property type="protein sequence ID" value="CAA35071.1"/>
    <property type="molecule type" value="Genomic_DNA"/>
</dbReference>
<dbReference type="EMBL" id="AJ005163">
    <property type="protein sequence ID" value="CAA06399.1"/>
    <property type="molecule type" value="Genomic_DNA"/>
</dbReference>
<dbReference type="EMBL" id="AF198100">
    <property type="protein sequence ID" value="AAF44399.1"/>
    <property type="molecule type" value="Genomic_DNA"/>
</dbReference>
<dbReference type="PIR" id="H35216">
    <property type="entry name" value="H35216"/>
</dbReference>
<dbReference type="RefSeq" id="NP_039018.1">
    <property type="nucleotide sequence ID" value="NC_002188.1"/>
</dbReference>
<dbReference type="SMR" id="P21975"/>
<dbReference type="GeneID" id="1486603"/>
<dbReference type="KEGG" id="vg:1486603"/>
<dbReference type="Proteomes" id="UP000008597">
    <property type="component" value="Segment"/>
</dbReference>
<dbReference type="GO" id="GO:0019815">
    <property type="term" value="C:B cell receptor complex"/>
    <property type="evidence" value="ECO:0007669"/>
    <property type="project" value="TreeGrafter"/>
</dbReference>
<dbReference type="GO" id="GO:0050853">
    <property type="term" value="P:B cell receptor signaling pathway"/>
    <property type="evidence" value="ECO:0007669"/>
    <property type="project" value="TreeGrafter"/>
</dbReference>
<dbReference type="Gene3D" id="2.60.40.10">
    <property type="entry name" value="Immunoglobulins"/>
    <property type="match status" value="2"/>
</dbReference>
<dbReference type="InterPro" id="IPR007110">
    <property type="entry name" value="Ig-like_dom"/>
</dbReference>
<dbReference type="InterPro" id="IPR036179">
    <property type="entry name" value="Ig-like_dom_sf"/>
</dbReference>
<dbReference type="InterPro" id="IPR013783">
    <property type="entry name" value="Ig-like_fold"/>
</dbReference>
<dbReference type="InterPro" id="IPR003599">
    <property type="entry name" value="Ig_sub"/>
</dbReference>
<dbReference type="InterPro" id="IPR013151">
    <property type="entry name" value="Immunoglobulin_dom"/>
</dbReference>
<dbReference type="PANTHER" id="PTHR14334">
    <property type="entry name" value="B-CELL ANTIGEN RECEPTOR COMPLEX-ASSOCIATED PROTEIN"/>
    <property type="match status" value="1"/>
</dbReference>
<dbReference type="Pfam" id="PF00047">
    <property type="entry name" value="ig"/>
    <property type="match status" value="1"/>
</dbReference>
<dbReference type="SMART" id="SM00409">
    <property type="entry name" value="IG"/>
    <property type="match status" value="2"/>
</dbReference>
<dbReference type="SUPFAM" id="SSF48726">
    <property type="entry name" value="Immunoglobulin"/>
    <property type="match status" value="2"/>
</dbReference>
<dbReference type="PROSITE" id="PS50835">
    <property type="entry name" value="IG_LIKE"/>
    <property type="match status" value="2"/>
</dbReference>
<organismHost>
    <name type="scientific">Vertebrata</name>
    <dbReference type="NCBI Taxonomy" id="7742"/>
</organismHost>